<comment type="function">
    <text evidence="1">Carrier of the growing fatty acid chain in fatty acid biosynthesis.</text>
</comment>
<comment type="pathway">
    <text evidence="1">Lipid metabolism; fatty acid biosynthesis.</text>
</comment>
<comment type="subcellular location">
    <subcellularLocation>
        <location evidence="1">Cytoplasm</location>
    </subcellularLocation>
</comment>
<comment type="PTM">
    <text evidence="1">4'-phosphopantetheine is transferred from CoA to a specific serine of apo-ACP by AcpS. This modification is essential for activity because fatty acids are bound in thioester linkage to the sulfhydryl of the prosthetic group.</text>
</comment>
<comment type="similarity">
    <text evidence="1">Belongs to the acyl carrier protein (ACP) family.</text>
</comment>
<name>ACP_PHYAS</name>
<proteinExistence type="inferred from homology"/>
<gene>
    <name evidence="1" type="primary">acpP</name>
    <name type="ordered locus">PA0099</name>
</gene>
<sequence length="76" mass="8737">MVLEKIKTLMVNQLSLDSQSITLKTRFREDLGLDSLDALELMMELEKIFNVSISDTTLQNFKTVEDVVLYIEKNLA</sequence>
<feature type="chain" id="PRO_1000139049" description="Acyl carrier protein">
    <location>
        <begin position="1"/>
        <end position="76"/>
    </location>
</feature>
<feature type="domain" description="Carrier" evidence="2">
    <location>
        <begin position="1"/>
        <end position="75"/>
    </location>
</feature>
<feature type="modified residue" description="O-(pantetheine 4'-phosphoryl)serine" evidence="2">
    <location>
        <position position="35"/>
    </location>
</feature>
<protein>
    <recommendedName>
        <fullName evidence="1">Acyl carrier protein</fullName>
        <shortName evidence="1">ACP</shortName>
    </recommendedName>
</protein>
<keyword id="KW-0963">Cytoplasm</keyword>
<keyword id="KW-0275">Fatty acid biosynthesis</keyword>
<keyword id="KW-0276">Fatty acid metabolism</keyword>
<keyword id="KW-0444">Lipid biosynthesis</keyword>
<keyword id="KW-0443">Lipid metabolism</keyword>
<keyword id="KW-0596">Phosphopantetheine</keyword>
<keyword id="KW-0597">Phosphoprotein</keyword>
<keyword id="KW-1185">Reference proteome</keyword>
<evidence type="ECO:0000255" key="1">
    <source>
        <dbReference type="HAMAP-Rule" id="MF_01217"/>
    </source>
</evidence>
<evidence type="ECO:0000255" key="2">
    <source>
        <dbReference type="PROSITE-ProRule" id="PRU00258"/>
    </source>
</evidence>
<dbReference type="EMBL" id="AM422018">
    <property type="protein sequence ID" value="CAM11434.1"/>
    <property type="molecule type" value="Genomic_DNA"/>
</dbReference>
<dbReference type="SMR" id="B1V902"/>
<dbReference type="STRING" id="59748.PA0099"/>
<dbReference type="KEGG" id="pal:PA0099"/>
<dbReference type="eggNOG" id="COG0236">
    <property type="taxonomic scope" value="Bacteria"/>
</dbReference>
<dbReference type="UniPathway" id="UPA00094"/>
<dbReference type="Proteomes" id="UP000008323">
    <property type="component" value="Chromosome"/>
</dbReference>
<dbReference type="GO" id="GO:0005829">
    <property type="term" value="C:cytosol"/>
    <property type="evidence" value="ECO:0007669"/>
    <property type="project" value="TreeGrafter"/>
</dbReference>
<dbReference type="GO" id="GO:0016020">
    <property type="term" value="C:membrane"/>
    <property type="evidence" value="ECO:0007669"/>
    <property type="project" value="GOC"/>
</dbReference>
<dbReference type="GO" id="GO:0000035">
    <property type="term" value="F:acyl binding"/>
    <property type="evidence" value="ECO:0007669"/>
    <property type="project" value="TreeGrafter"/>
</dbReference>
<dbReference type="GO" id="GO:0000036">
    <property type="term" value="F:acyl carrier activity"/>
    <property type="evidence" value="ECO:0007669"/>
    <property type="project" value="UniProtKB-UniRule"/>
</dbReference>
<dbReference type="GO" id="GO:0009245">
    <property type="term" value="P:lipid A biosynthetic process"/>
    <property type="evidence" value="ECO:0007669"/>
    <property type="project" value="TreeGrafter"/>
</dbReference>
<dbReference type="Gene3D" id="1.10.1200.10">
    <property type="entry name" value="ACP-like"/>
    <property type="match status" value="1"/>
</dbReference>
<dbReference type="HAMAP" id="MF_01217">
    <property type="entry name" value="Acyl_carrier"/>
    <property type="match status" value="1"/>
</dbReference>
<dbReference type="InterPro" id="IPR003231">
    <property type="entry name" value="ACP"/>
</dbReference>
<dbReference type="InterPro" id="IPR036736">
    <property type="entry name" value="ACP-like_sf"/>
</dbReference>
<dbReference type="InterPro" id="IPR009081">
    <property type="entry name" value="PP-bd_ACP"/>
</dbReference>
<dbReference type="NCBIfam" id="TIGR00517">
    <property type="entry name" value="acyl_carrier"/>
    <property type="match status" value="1"/>
</dbReference>
<dbReference type="NCBIfam" id="NF002148">
    <property type="entry name" value="PRK00982.1-2"/>
    <property type="match status" value="1"/>
</dbReference>
<dbReference type="NCBIfam" id="NF002150">
    <property type="entry name" value="PRK00982.1-4"/>
    <property type="match status" value="1"/>
</dbReference>
<dbReference type="PANTHER" id="PTHR20863">
    <property type="entry name" value="ACYL CARRIER PROTEIN"/>
    <property type="match status" value="1"/>
</dbReference>
<dbReference type="PANTHER" id="PTHR20863:SF76">
    <property type="entry name" value="CARRIER DOMAIN-CONTAINING PROTEIN"/>
    <property type="match status" value="1"/>
</dbReference>
<dbReference type="Pfam" id="PF00550">
    <property type="entry name" value="PP-binding"/>
    <property type="match status" value="1"/>
</dbReference>
<dbReference type="SUPFAM" id="SSF47336">
    <property type="entry name" value="ACP-like"/>
    <property type="match status" value="1"/>
</dbReference>
<dbReference type="PROSITE" id="PS50075">
    <property type="entry name" value="CARRIER"/>
    <property type="match status" value="1"/>
</dbReference>
<reference key="1">
    <citation type="journal article" date="2008" name="J. Bacteriol.">
        <title>Comparative genome analysis of 'Candidatus Phytoplasma australiense' (subgroup tuf-Australia I; rp-A) and 'Ca. Phytoplasma asteris' strains OY-M and AY-WB.</title>
        <authorList>
            <person name="Tran-Nguyen L.T."/>
            <person name="Kube M."/>
            <person name="Schneider B."/>
            <person name="Reinhardt R."/>
            <person name="Gibb K.S."/>
        </authorList>
    </citation>
    <scope>NUCLEOTIDE SEQUENCE [LARGE SCALE GENOMIC DNA]</scope>
</reference>
<accession>B1V902</accession>
<organism>
    <name type="scientific">Phytoplasma australiense</name>
    <dbReference type="NCBI Taxonomy" id="59748"/>
    <lineage>
        <taxon>Bacteria</taxon>
        <taxon>Bacillati</taxon>
        <taxon>Mycoplasmatota</taxon>
        <taxon>Mollicutes</taxon>
        <taxon>Acholeplasmatales</taxon>
        <taxon>Acholeplasmataceae</taxon>
        <taxon>Candidatus Phytoplasma</taxon>
        <taxon>16SrXII (Stolbur group)</taxon>
    </lineage>
</organism>